<comment type="function">
    <text evidence="1">Involved in mRNA degradation. Catalyzes the phosphorolysis of single-stranded polyribonucleotides processively in the 3'- to 5'-direction.</text>
</comment>
<comment type="catalytic activity">
    <reaction evidence="1">
        <text>RNA(n+1) + phosphate = RNA(n) + a ribonucleoside 5'-diphosphate</text>
        <dbReference type="Rhea" id="RHEA:22096"/>
        <dbReference type="Rhea" id="RHEA-COMP:14527"/>
        <dbReference type="Rhea" id="RHEA-COMP:17342"/>
        <dbReference type="ChEBI" id="CHEBI:43474"/>
        <dbReference type="ChEBI" id="CHEBI:57930"/>
        <dbReference type="ChEBI" id="CHEBI:140395"/>
        <dbReference type="EC" id="2.7.7.8"/>
    </reaction>
</comment>
<comment type="cofactor">
    <cofactor evidence="1">
        <name>Mg(2+)</name>
        <dbReference type="ChEBI" id="CHEBI:18420"/>
    </cofactor>
</comment>
<comment type="subcellular location">
    <subcellularLocation>
        <location evidence="1">Cytoplasm</location>
    </subcellularLocation>
</comment>
<comment type="similarity">
    <text evidence="1">Belongs to the polyribonucleotide nucleotidyltransferase family.</text>
</comment>
<gene>
    <name evidence="1" type="primary">pnp</name>
    <name type="ordered locus">CTN_1246</name>
</gene>
<evidence type="ECO:0000255" key="1">
    <source>
        <dbReference type="HAMAP-Rule" id="MF_01595"/>
    </source>
</evidence>
<protein>
    <recommendedName>
        <fullName evidence="1">Polyribonucleotide nucleotidyltransferase</fullName>
        <ecNumber evidence="1">2.7.7.8</ecNumber>
    </recommendedName>
    <alternativeName>
        <fullName evidence="1">Polynucleotide phosphorylase</fullName>
        <shortName evidence="1">PNPase</shortName>
    </alternativeName>
</protein>
<proteinExistence type="inferred from homology"/>
<organism>
    <name type="scientific">Thermotoga neapolitana (strain ATCC 49049 / DSM 4359 / NBRC 107923 / NS-E)</name>
    <dbReference type="NCBI Taxonomy" id="309803"/>
    <lineage>
        <taxon>Bacteria</taxon>
        <taxon>Thermotogati</taxon>
        <taxon>Thermotogota</taxon>
        <taxon>Thermotogae</taxon>
        <taxon>Thermotogales</taxon>
        <taxon>Thermotogaceae</taxon>
        <taxon>Thermotoga</taxon>
    </lineage>
</organism>
<keyword id="KW-0963">Cytoplasm</keyword>
<keyword id="KW-0460">Magnesium</keyword>
<keyword id="KW-0479">Metal-binding</keyword>
<keyword id="KW-0548">Nucleotidyltransferase</keyword>
<keyword id="KW-0694">RNA-binding</keyword>
<keyword id="KW-0808">Transferase</keyword>
<dbReference type="EC" id="2.7.7.8" evidence="1"/>
<dbReference type="EMBL" id="CP000916">
    <property type="protein sequence ID" value="ACM23422.1"/>
    <property type="molecule type" value="Genomic_DNA"/>
</dbReference>
<dbReference type="RefSeq" id="WP_015919737.1">
    <property type="nucleotide sequence ID" value="NC_011978.1"/>
</dbReference>
<dbReference type="SMR" id="B9K8Y9"/>
<dbReference type="STRING" id="309803.CTN_1246"/>
<dbReference type="KEGG" id="tna:CTN_1246"/>
<dbReference type="eggNOG" id="COG1185">
    <property type="taxonomic scope" value="Bacteria"/>
</dbReference>
<dbReference type="HOGENOM" id="CLU_004217_2_2_0"/>
<dbReference type="Proteomes" id="UP000000445">
    <property type="component" value="Chromosome"/>
</dbReference>
<dbReference type="GO" id="GO:0005829">
    <property type="term" value="C:cytosol"/>
    <property type="evidence" value="ECO:0007669"/>
    <property type="project" value="TreeGrafter"/>
</dbReference>
<dbReference type="GO" id="GO:0000175">
    <property type="term" value="F:3'-5'-RNA exonuclease activity"/>
    <property type="evidence" value="ECO:0007669"/>
    <property type="project" value="TreeGrafter"/>
</dbReference>
<dbReference type="GO" id="GO:0000287">
    <property type="term" value="F:magnesium ion binding"/>
    <property type="evidence" value="ECO:0007669"/>
    <property type="project" value="UniProtKB-UniRule"/>
</dbReference>
<dbReference type="GO" id="GO:0004654">
    <property type="term" value="F:polyribonucleotide nucleotidyltransferase activity"/>
    <property type="evidence" value="ECO:0007669"/>
    <property type="project" value="UniProtKB-UniRule"/>
</dbReference>
<dbReference type="GO" id="GO:0003723">
    <property type="term" value="F:RNA binding"/>
    <property type="evidence" value="ECO:0007669"/>
    <property type="project" value="UniProtKB-UniRule"/>
</dbReference>
<dbReference type="GO" id="GO:0006402">
    <property type="term" value="P:mRNA catabolic process"/>
    <property type="evidence" value="ECO:0007669"/>
    <property type="project" value="UniProtKB-UniRule"/>
</dbReference>
<dbReference type="GO" id="GO:0006396">
    <property type="term" value="P:RNA processing"/>
    <property type="evidence" value="ECO:0007669"/>
    <property type="project" value="InterPro"/>
</dbReference>
<dbReference type="CDD" id="cd02393">
    <property type="entry name" value="KH-I_PNPase"/>
    <property type="match status" value="1"/>
</dbReference>
<dbReference type="CDD" id="cd11363">
    <property type="entry name" value="RNase_PH_PNPase_1"/>
    <property type="match status" value="1"/>
</dbReference>
<dbReference type="CDD" id="cd11364">
    <property type="entry name" value="RNase_PH_PNPase_2"/>
    <property type="match status" value="1"/>
</dbReference>
<dbReference type="FunFam" id="3.30.1370.10:FF:000001">
    <property type="entry name" value="Polyribonucleotide nucleotidyltransferase"/>
    <property type="match status" value="1"/>
</dbReference>
<dbReference type="FunFam" id="3.30.230.70:FF:000001">
    <property type="entry name" value="Polyribonucleotide nucleotidyltransferase"/>
    <property type="match status" value="1"/>
</dbReference>
<dbReference type="FunFam" id="3.30.230.70:FF:000002">
    <property type="entry name" value="Polyribonucleotide nucleotidyltransferase"/>
    <property type="match status" value="1"/>
</dbReference>
<dbReference type="Gene3D" id="3.30.230.70">
    <property type="entry name" value="GHMP Kinase, N-terminal domain"/>
    <property type="match status" value="2"/>
</dbReference>
<dbReference type="Gene3D" id="3.30.1370.10">
    <property type="entry name" value="K Homology domain, type 1"/>
    <property type="match status" value="1"/>
</dbReference>
<dbReference type="Gene3D" id="2.40.50.140">
    <property type="entry name" value="Nucleic acid-binding proteins"/>
    <property type="match status" value="1"/>
</dbReference>
<dbReference type="HAMAP" id="MF_01595">
    <property type="entry name" value="PNPase"/>
    <property type="match status" value="1"/>
</dbReference>
<dbReference type="InterPro" id="IPR001247">
    <property type="entry name" value="ExoRNase_PH_dom1"/>
</dbReference>
<dbReference type="InterPro" id="IPR015847">
    <property type="entry name" value="ExoRNase_PH_dom2"/>
</dbReference>
<dbReference type="InterPro" id="IPR036345">
    <property type="entry name" value="ExoRNase_PH_dom2_sf"/>
</dbReference>
<dbReference type="InterPro" id="IPR004087">
    <property type="entry name" value="KH_dom"/>
</dbReference>
<dbReference type="InterPro" id="IPR004088">
    <property type="entry name" value="KH_dom_type_1"/>
</dbReference>
<dbReference type="InterPro" id="IPR036612">
    <property type="entry name" value="KH_dom_type_1_sf"/>
</dbReference>
<dbReference type="InterPro" id="IPR012340">
    <property type="entry name" value="NA-bd_OB-fold"/>
</dbReference>
<dbReference type="InterPro" id="IPR012162">
    <property type="entry name" value="PNPase"/>
</dbReference>
<dbReference type="InterPro" id="IPR027408">
    <property type="entry name" value="PNPase/RNase_PH_dom_sf"/>
</dbReference>
<dbReference type="InterPro" id="IPR015848">
    <property type="entry name" value="PNPase_PH_RNA-bd_bac/org-type"/>
</dbReference>
<dbReference type="InterPro" id="IPR020568">
    <property type="entry name" value="Ribosomal_Su5_D2-typ_SF"/>
</dbReference>
<dbReference type="InterPro" id="IPR003029">
    <property type="entry name" value="S1_domain"/>
</dbReference>
<dbReference type="NCBIfam" id="TIGR03591">
    <property type="entry name" value="polynuc_phos"/>
    <property type="match status" value="1"/>
</dbReference>
<dbReference type="NCBIfam" id="NF008805">
    <property type="entry name" value="PRK11824.1"/>
    <property type="match status" value="1"/>
</dbReference>
<dbReference type="PANTHER" id="PTHR11252">
    <property type="entry name" value="POLYRIBONUCLEOTIDE NUCLEOTIDYLTRANSFERASE"/>
    <property type="match status" value="1"/>
</dbReference>
<dbReference type="PANTHER" id="PTHR11252:SF0">
    <property type="entry name" value="POLYRIBONUCLEOTIDE NUCLEOTIDYLTRANSFERASE 1, MITOCHONDRIAL"/>
    <property type="match status" value="1"/>
</dbReference>
<dbReference type="Pfam" id="PF00013">
    <property type="entry name" value="KH_1"/>
    <property type="match status" value="1"/>
</dbReference>
<dbReference type="Pfam" id="PF03726">
    <property type="entry name" value="PNPase"/>
    <property type="match status" value="1"/>
</dbReference>
<dbReference type="Pfam" id="PF01138">
    <property type="entry name" value="RNase_PH"/>
    <property type="match status" value="2"/>
</dbReference>
<dbReference type="Pfam" id="PF03725">
    <property type="entry name" value="RNase_PH_C"/>
    <property type="match status" value="2"/>
</dbReference>
<dbReference type="Pfam" id="PF00575">
    <property type="entry name" value="S1"/>
    <property type="match status" value="1"/>
</dbReference>
<dbReference type="PIRSF" id="PIRSF005499">
    <property type="entry name" value="PNPase"/>
    <property type="match status" value="1"/>
</dbReference>
<dbReference type="SMART" id="SM00322">
    <property type="entry name" value="KH"/>
    <property type="match status" value="1"/>
</dbReference>
<dbReference type="SMART" id="SM00316">
    <property type="entry name" value="S1"/>
    <property type="match status" value="1"/>
</dbReference>
<dbReference type="SUPFAM" id="SSF54791">
    <property type="entry name" value="Eukaryotic type KH-domain (KH-domain type I)"/>
    <property type="match status" value="1"/>
</dbReference>
<dbReference type="SUPFAM" id="SSF50249">
    <property type="entry name" value="Nucleic acid-binding proteins"/>
    <property type="match status" value="1"/>
</dbReference>
<dbReference type="SUPFAM" id="SSF55666">
    <property type="entry name" value="Ribonuclease PH domain 2-like"/>
    <property type="match status" value="2"/>
</dbReference>
<dbReference type="SUPFAM" id="SSF54211">
    <property type="entry name" value="Ribosomal protein S5 domain 2-like"/>
    <property type="match status" value="2"/>
</dbReference>
<dbReference type="PROSITE" id="PS50084">
    <property type="entry name" value="KH_TYPE_1"/>
    <property type="match status" value="1"/>
</dbReference>
<dbReference type="PROSITE" id="PS50126">
    <property type="entry name" value="S1"/>
    <property type="match status" value="1"/>
</dbReference>
<reference key="1">
    <citation type="submission" date="2007-11" db="EMBL/GenBank/DDBJ databases">
        <title>The genome sequence of the hyperthermophilic bacterium Thermotoga neapolitana.</title>
        <authorList>
            <person name="Lim S.K."/>
            <person name="Kim J.S."/>
            <person name="Cha S.H."/>
            <person name="Park B.C."/>
            <person name="Lee D.S."/>
            <person name="Tae H.S."/>
            <person name="Kim S.-J."/>
            <person name="Kim J.J."/>
            <person name="Park K.J."/>
            <person name="Lee S.Y."/>
        </authorList>
    </citation>
    <scope>NUCLEOTIDE SEQUENCE [LARGE SCALE GENOMIC DNA]</scope>
    <source>
        <strain>ATCC 49049 / DSM 4359 / NBRC 107923 / NS-E</strain>
    </source>
</reference>
<accession>B9K8Y9</accession>
<sequence length="707" mass="78671">MKEWRREILGRELVVQHGKVAKQSSGAVLVRFGDTAVLATANISDKVIEGIDFVPLTVEFQERFYAAGKIPGGFIKREGKPSESAILSARLIDRPIRPLFPKKLRNEIQVIVTVLSADPNVPPDVVGIFAVSLALNVSKIPFEGIVAGIRIGYRDGQFIAFPTEEDIEKGLMDITVAGTKDAVTMVEGEAKEVSEEDMVKALRFAHSVIKELVDFQEEILSEFNVEKIPVVEPEPPEGLVETFNSLLDREELERRILVKAKKEREAALKEYEEKLLSQTAEALSIVDPEEIKPFVSELYEEAVKKTMRRLIVEKGIRADGRKPNEIRPISCEVGLFPRTHGSALFTRGETQSLGIVTLGAPMDVQIIDTLLEEGVKRFMLHYNFPPFCTGEVKPLRGPSRREIGHGHLAERALKNMLPPEEEFPYTIRVVSEILESNGSSSMATVCSGSLALMDAGVPIRKHVAGIAMGLILEEDAEVILTDIIGMEDHYGDMDFKVAGTRDGITAFQMDCKVSGVSDELLMKALMQAREARMYILDKMYETISAPRPHLSRYAPIIKVTKIDPDKVADVIGPGGRVIKKIIKDFDVKVEIDDETGLVKVVGNSEENVDNAIALIREIAKEIEVGEILEGKITRIEPYGLFIEVRPGKIGLLHQSKVGEDMRQFLKKVKVGDTIKVQVINIDDLGRLQFKRVKEESPQHGEVHNKRH</sequence>
<name>PNP_THENN</name>
<feature type="chain" id="PRO_1000185759" description="Polyribonucleotide nucleotidyltransferase">
    <location>
        <begin position="1"/>
        <end position="707"/>
    </location>
</feature>
<feature type="domain" description="KH" evidence="1">
    <location>
        <begin position="555"/>
        <end position="615"/>
    </location>
</feature>
<feature type="domain" description="S1 motif" evidence="1">
    <location>
        <begin position="625"/>
        <end position="692"/>
    </location>
</feature>
<feature type="binding site" evidence="1">
    <location>
        <position position="488"/>
    </location>
    <ligand>
        <name>Mg(2+)</name>
        <dbReference type="ChEBI" id="CHEBI:18420"/>
    </ligand>
</feature>
<feature type="binding site" evidence="1">
    <location>
        <position position="494"/>
    </location>
    <ligand>
        <name>Mg(2+)</name>
        <dbReference type="ChEBI" id="CHEBI:18420"/>
    </ligand>
</feature>